<evidence type="ECO:0000250" key="1">
    <source>
        <dbReference type="UniProtKB" id="P42935"/>
    </source>
</evidence>
<evidence type="ECO:0000250" key="2">
    <source>
        <dbReference type="UniProtKB" id="Q91WG4"/>
    </source>
</evidence>
<evidence type="ECO:0000269" key="3">
    <source>
    </source>
</evidence>
<evidence type="ECO:0000269" key="4">
    <source>
    </source>
</evidence>
<evidence type="ECO:0000269" key="5">
    <source>
    </source>
</evidence>
<evidence type="ECO:0000269" key="6">
    <source>
    </source>
</evidence>
<evidence type="ECO:0000269" key="7">
    <source>
    </source>
</evidence>
<evidence type="ECO:0000269" key="8">
    <source>
    </source>
</evidence>
<evidence type="ECO:0000269" key="9">
    <source ref="5"/>
</evidence>
<evidence type="ECO:0000303" key="10">
    <source>
    </source>
</evidence>
<evidence type="ECO:0000303" key="11">
    <source>
    </source>
</evidence>
<evidence type="ECO:0000303" key="12">
    <source>
    </source>
</evidence>
<evidence type="ECO:0000303" key="13">
    <source ref="1"/>
</evidence>
<evidence type="ECO:0000303" key="14">
    <source ref="2"/>
</evidence>
<evidence type="ECO:0000305" key="15"/>
<evidence type="ECO:0000305" key="16">
    <source>
    </source>
</evidence>
<evidence type="ECO:0000305" key="17">
    <source>
    </source>
</evidence>
<evidence type="ECO:0000305" key="18">
    <source>
    </source>
</evidence>
<evidence type="ECO:0007829" key="19">
    <source>
        <dbReference type="PDB" id="8PTX"/>
    </source>
</evidence>
<evidence type="ECO:0007829" key="20">
    <source>
        <dbReference type="PDB" id="8PTZ"/>
    </source>
</evidence>
<sequence length="826" mass="92500">MVAPVLETSHVFCCPNRVRGVLNWSSGPRGLLAFGTSCSVVLYDPLKRVVVTNLNGHTARVNCIQWICKQDGSPSTELVSGGSDNQVIHWEIEDNQLLKAVHLQGHEGPVYAVHAVYQRRTSDPALCTLIVSAAADSAVRLWSKKGPEVMCLQTLNFGNGFALALCLSFLPNTDVPILACGNDDCRIHIFAQQNDQFQKVLSLCGHEDWIRGVEWAAFGRDLFLASCSQDCLIRIWKLYIKSTSLETQDDDNIRLKENTFTIENESVKIAFAVTLETVLAGHENWVNAVHWQPVFYKDGVLQQPVRLLSASMDKTMILWAPDEESGVWLEQVRVGEVGGNTLGFYDCQFNEDGSMIIAHAFHGALHLWKQNTVNPREWTPEIVISGHFDGVQDLVWDPEGEFIITVGTDQTTRLFAPWKRKDQSQVTWHEIARPQIHGYDLKCLAMINRFQFVSGADEKVLRVFSAPRNFVENFCAITGQSLNHVLCNQDSDLPEGATVPALGLSNKAVFQGDIASQPSDEEELLTSTGFEYQQVAFQPSILTEPPTEDHLLQNTLWPEVQKLYGHGYEIFCVTCNSSKTLLASACKAAKKEHAAIILWNTTSWKQVQNLVFHSLTVTQMAFSPNEKFLLAVSRDRTWSLWKKQDTISPEFEPVFSLFAFTNKITSVHSRIIWSCDWSPDSKYFFTGSRDKKVVVWGECDSTDDCIEHNIGPCSSVLDVGGAVTAVSVCPVLHPSQRYVVAVGLECGKICLYTWKKTDQVPEINDWTHCVETSQSQSHTLAIRKLCWKNCSGKTEQKEAEGAEWLHFASCGEDHTVKIHRVNKCAL</sequence>
<gene>
    <name type="primary">ELP2</name>
    <name type="synonym">STATIP1</name>
</gene>
<reference key="1">
    <citation type="submission" date="2000-12" db="EMBL/GenBank/DDBJ databases">
        <authorList>
            <person name="Zhao C."/>
        </authorList>
    </citation>
    <scope>NUCLEOTIDE SEQUENCE [MRNA] (ISOFORM 2)</scope>
    <source>
        <tissue>Hematopoietic</tissue>
    </source>
</reference>
<reference key="2">
    <citation type="submission" date="2001-07" db="EMBL/GenBank/DDBJ databases">
        <title>Shinc-2 gene expression is modulated in human prostate cancer cells treated with biological anticancer agents.</title>
        <authorList>
            <person name="Sakabe I."/>
            <person name="Suy S."/>
            <person name="Kumar D."/>
            <person name="Ahmad I."/>
            <person name="Kasid U."/>
        </authorList>
    </citation>
    <scope>NUCLEOTIDE SEQUENCE [MRNA] (ISOFORM 4)</scope>
</reference>
<reference key="3">
    <citation type="journal article" date="2004" name="Nat. Genet.">
        <title>Complete sequencing and characterization of 21,243 full-length human cDNAs.</title>
        <authorList>
            <person name="Ota T."/>
            <person name="Suzuki Y."/>
            <person name="Nishikawa T."/>
            <person name="Otsuki T."/>
            <person name="Sugiyama T."/>
            <person name="Irie R."/>
            <person name="Wakamatsu A."/>
            <person name="Hayashi K."/>
            <person name="Sato H."/>
            <person name="Nagai K."/>
            <person name="Kimura K."/>
            <person name="Makita H."/>
            <person name="Sekine M."/>
            <person name="Obayashi M."/>
            <person name="Nishi T."/>
            <person name="Shibahara T."/>
            <person name="Tanaka T."/>
            <person name="Ishii S."/>
            <person name="Yamamoto J."/>
            <person name="Saito K."/>
            <person name="Kawai Y."/>
            <person name="Isono Y."/>
            <person name="Nakamura Y."/>
            <person name="Nagahari K."/>
            <person name="Murakami K."/>
            <person name="Yasuda T."/>
            <person name="Iwayanagi T."/>
            <person name="Wagatsuma M."/>
            <person name="Shiratori A."/>
            <person name="Sudo H."/>
            <person name="Hosoiri T."/>
            <person name="Kaku Y."/>
            <person name="Kodaira H."/>
            <person name="Kondo H."/>
            <person name="Sugawara M."/>
            <person name="Takahashi M."/>
            <person name="Kanda K."/>
            <person name="Yokoi T."/>
            <person name="Furuya T."/>
            <person name="Kikkawa E."/>
            <person name="Omura Y."/>
            <person name="Abe K."/>
            <person name="Kamihara K."/>
            <person name="Katsuta N."/>
            <person name="Sato K."/>
            <person name="Tanikawa M."/>
            <person name="Yamazaki M."/>
            <person name="Ninomiya K."/>
            <person name="Ishibashi T."/>
            <person name="Yamashita H."/>
            <person name="Murakawa K."/>
            <person name="Fujimori K."/>
            <person name="Tanai H."/>
            <person name="Kimata M."/>
            <person name="Watanabe M."/>
            <person name="Hiraoka S."/>
            <person name="Chiba Y."/>
            <person name="Ishida S."/>
            <person name="Ono Y."/>
            <person name="Takiguchi S."/>
            <person name="Watanabe S."/>
            <person name="Yosida M."/>
            <person name="Hotuta T."/>
            <person name="Kusano J."/>
            <person name="Kanehori K."/>
            <person name="Takahashi-Fujii A."/>
            <person name="Hara H."/>
            <person name="Tanase T.-O."/>
            <person name="Nomura Y."/>
            <person name="Togiya S."/>
            <person name="Komai F."/>
            <person name="Hara R."/>
            <person name="Takeuchi K."/>
            <person name="Arita M."/>
            <person name="Imose N."/>
            <person name="Musashino K."/>
            <person name="Yuuki H."/>
            <person name="Oshima A."/>
            <person name="Sasaki N."/>
            <person name="Aotsuka S."/>
            <person name="Yoshikawa Y."/>
            <person name="Matsunawa H."/>
            <person name="Ichihara T."/>
            <person name="Shiohata N."/>
            <person name="Sano S."/>
            <person name="Moriya S."/>
            <person name="Momiyama H."/>
            <person name="Satoh N."/>
            <person name="Takami S."/>
            <person name="Terashima Y."/>
            <person name="Suzuki O."/>
            <person name="Nakagawa S."/>
            <person name="Senoh A."/>
            <person name="Mizoguchi H."/>
            <person name="Goto Y."/>
            <person name="Shimizu F."/>
            <person name="Wakebe H."/>
            <person name="Hishigaki H."/>
            <person name="Watanabe T."/>
            <person name="Sugiyama A."/>
            <person name="Takemoto M."/>
            <person name="Kawakami B."/>
            <person name="Yamazaki M."/>
            <person name="Watanabe K."/>
            <person name="Kumagai A."/>
            <person name="Itakura S."/>
            <person name="Fukuzumi Y."/>
            <person name="Fujimori Y."/>
            <person name="Komiyama M."/>
            <person name="Tashiro H."/>
            <person name="Tanigami A."/>
            <person name="Fujiwara T."/>
            <person name="Ono T."/>
            <person name="Yamada K."/>
            <person name="Fujii Y."/>
            <person name="Ozaki K."/>
            <person name="Hirao M."/>
            <person name="Ohmori Y."/>
            <person name="Kawabata A."/>
            <person name="Hikiji T."/>
            <person name="Kobatake N."/>
            <person name="Inagaki H."/>
            <person name="Ikema Y."/>
            <person name="Okamoto S."/>
            <person name="Okitani R."/>
            <person name="Kawakami T."/>
            <person name="Noguchi S."/>
            <person name="Itoh T."/>
            <person name="Shigeta K."/>
            <person name="Senba T."/>
            <person name="Matsumura K."/>
            <person name="Nakajima Y."/>
            <person name="Mizuno T."/>
            <person name="Morinaga M."/>
            <person name="Sasaki M."/>
            <person name="Togashi T."/>
            <person name="Oyama M."/>
            <person name="Hata H."/>
            <person name="Watanabe M."/>
            <person name="Komatsu T."/>
            <person name="Mizushima-Sugano J."/>
            <person name="Satoh T."/>
            <person name="Shirai Y."/>
            <person name="Takahashi Y."/>
            <person name="Nakagawa K."/>
            <person name="Okumura K."/>
            <person name="Nagase T."/>
            <person name="Nomura N."/>
            <person name="Kikuchi H."/>
            <person name="Masuho Y."/>
            <person name="Yamashita R."/>
            <person name="Nakai K."/>
            <person name="Yada T."/>
            <person name="Nakamura Y."/>
            <person name="Ohara O."/>
            <person name="Isogai T."/>
            <person name="Sugano S."/>
        </authorList>
    </citation>
    <scope>NUCLEOTIDE SEQUENCE [LARGE SCALE MRNA] (ISOFORMS 1; 3; 5; 6 AND 7)</scope>
    <scope>VARIANTS PRO-128 AND MET-305</scope>
    <source>
        <tissue>Placenta</tissue>
        <tissue>Testis</tissue>
        <tissue>Uterus</tissue>
    </source>
</reference>
<reference key="4">
    <citation type="submission" date="2004-06" db="EMBL/GenBank/DDBJ databases">
        <title>Cloning of human full open reading frames in Gateway(TM) system entry vector (pDONR201).</title>
        <authorList>
            <person name="Ebert L."/>
            <person name="Schick M."/>
            <person name="Neubert P."/>
            <person name="Schatten R."/>
            <person name="Henze S."/>
            <person name="Korn B."/>
        </authorList>
    </citation>
    <scope>NUCLEOTIDE SEQUENCE [LARGE SCALE MRNA] (ISOFORM 1)</scope>
</reference>
<reference key="5">
    <citation type="submission" date="2005-04" db="EMBL/GenBank/DDBJ databases">
        <authorList>
            <person name="Suzuki Y."/>
            <person name="Sugano S."/>
            <person name="Totoki Y."/>
            <person name="Toyoda A."/>
            <person name="Takeda T."/>
            <person name="Sakaki Y."/>
            <person name="Tanaka A."/>
            <person name="Yokoyama S."/>
        </authorList>
    </citation>
    <scope>NUCLEOTIDE SEQUENCE [LARGE SCALE MRNA] (ISOFORM 1)</scope>
    <scope>VARIANTS PRO-128 AND MET-305</scope>
    <source>
        <tissue>Liver</tissue>
    </source>
</reference>
<reference key="6">
    <citation type="journal article" date="2005" name="Nature">
        <title>DNA sequence and analysis of human chromosome 18.</title>
        <authorList>
            <person name="Nusbaum C."/>
            <person name="Zody M.C."/>
            <person name="Borowsky M.L."/>
            <person name="Kamal M."/>
            <person name="Kodira C.D."/>
            <person name="Taylor T.D."/>
            <person name="Whittaker C.A."/>
            <person name="Chang J.L."/>
            <person name="Cuomo C.A."/>
            <person name="Dewar K."/>
            <person name="FitzGerald M.G."/>
            <person name="Yang X."/>
            <person name="Abouelleil A."/>
            <person name="Allen N.R."/>
            <person name="Anderson S."/>
            <person name="Bloom T."/>
            <person name="Bugalter B."/>
            <person name="Butler J."/>
            <person name="Cook A."/>
            <person name="DeCaprio D."/>
            <person name="Engels R."/>
            <person name="Garber M."/>
            <person name="Gnirke A."/>
            <person name="Hafez N."/>
            <person name="Hall J.L."/>
            <person name="Norman C.H."/>
            <person name="Itoh T."/>
            <person name="Jaffe D.B."/>
            <person name="Kuroki Y."/>
            <person name="Lehoczky J."/>
            <person name="Lui A."/>
            <person name="Macdonald P."/>
            <person name="Mauceli E."/>
            <person name="Mikkelsen T.S."/>
            <person name="Naylor J.W."/>
            <person name="Nicol R."/>
            <person name="Nguyen C."/>
            <person name="Noguchi H."/>
            <person name="O'Leary S.B."/>
            <person name="Piqani B."/>
            <person name="Smith C.L."/>
            <person name="Talamas J.A."/>
            <person name="Topham K."/>
            <person name="Totoki Y."/>
            <person name="Toyoda A."/>
            <person name="Wain H.M."/>
            <person name="Young S.K."/>
            <person name="Zeng Q."/>
            <person name="Zimmer A.R."/>
            <person name="Fujiyama A."/>
            <person name="Hattori M."/>
            <person name="Birren B.W."/>
            <person name="Sakaki Y."/>
            <person name="Lander E.S."/>
        </authorList>
    </citation>
    <scope>NUCLEOTIDE SEQUENCE [LARGE SCALE GENOMIC DNA]</scope>
</reference>
<reference key="7">
    <citation type="journal article" date="2004" name="Genome Res.">
        <title>The status, quality, and expansion of the NIH full-length cDNA project: the Mammalian Gene Collection (MGC).</title>
        <authorList>
            <consortium name="The MGC Project Team"/>
        </authorList>
    </citation>
    <scope>NUCLEOTIDE SEQUENCE [LARGE SCALE MRNA] (ISOFORM 3)</scope>
    <source>
        <tissue>Ovary</tissue>
        <tissue>Uterus</tissue>
    </source>
</reference>
<reference key="8">
    <citation type="journal article" date="2002" name="J. Biol. Chem.">
        <title>Purification and characterization of the human elongator complex.</title>
        <authorList>
            <person name="Hawkes N.A."/>
            <person name="Otero G."/>
            <person name="Winkler G.S."/>
            <person name="Marshall N."/>
            <person name="Dahmus M.E."/>
            <person name="Krappmann D."/>
            <person name="Scheidereit C."/>
            <person name="Thomas C.L."/>
            <person name="Schiavo G."/>
            <person name="Erdjument-Bromage H."/>
            <person name="Tempst P."/>
            <person name="Svejstrup J.Q."/>
        </authorList>
    </citation>
    <scope>IDENTIFICATION IN THE ELONGATOR COMPLEX</scope>
    <scope>SUBCELLULAR LOCATION</scope>
    <scope>IDENTIFICATION BY MASS SPECTROMETRY</scope>
</reference>
<reference key="9">
    <citation type="journal article" date="2002" name="Proc. Natl. Acad. Sci. U.S.A.">
        <title>Human Elongator facilitates RNA polymerase II transcription through chromatin.</title>
        <authorList>
            <person name="Kim J.H."/>
            <person name="Lane W.S."/>
            <person name="Reinberg D."/>
        </authorList>
    </citation>
    <scope>IDENTIFICATION IN THE ELONGATOR CORE COMPLEX</scope>
    <scope>SUBCELLULAR LOCATION</scope>
    <scope>IDENTIFICATION BY MASS SPECTROMETRY</scope>
</reference>
<reference key="10">
    <citation type="journal article" date="2012" name="J. Biol. Chem.">
        <title>DERP6 (ELP5) and C3ORF75 (ELP6) regulate tumorigenicity and migration of melanoma cells as subunits of Elongator.</title>
        <authorList>
            <person name="Close P."/>
            <person name="Gillard M."/>
            <person name="Ladang A."/>
            <person name="Jiang Z."/>
            <person name="Papuga J."/>
            <person name="Hawkes N."/>
            <person name="Nguyen L."/>
            <person name="Chapelle J.P."/>
            <person name="Bouillenne F."/>
            <person name="Svejstrup J."/>
            <person name="Fillet M."/>
            <person name="Chariot A."/>
        </authorList>
    </citation>
    <scope>IDENTIFICATION IN THE ELONGATOR COMPLEX</scope>
</reference>
<reference key="11">
    <citation type="journal article" date="2015" name="Structure">
        <title>The Elp2 subunit is essential for elongator complex assembly and functional regulation.</title>
        <authorList>
            <person name="Dong C."/>
            <person name="Lin Z."/>
            <person name="Diao W."/>
            <person name="Li D."/>
            <person name="Chu X."/>
            <person name="Wang Z."/>
            <person name="Zhou H."/>
            <person name="Xie Z."/>
            <person name="Shen Y."/>
            <person name="Long J."/>
        </authorList>
    </citation>
    <scope>INTERACTION WITH ELP1 AND ELP3</scope>
    <scope>MUTAGENESIS OF 1-MET--ARG-17; ARG-634; ARG-636; ARG-670 AND ARG-689</scope>
</reference>
<reference key="12">
    <citation type="journal article" date="2018" name="Cell. Mol. Life Sci.">
        <title>Structural insights into the function of Elongator.</title>
        <authorList>
            <person name="Dalwadi U."/>
            <person name="Yip C.K."/>
        </authorList>
    </citation>
    <scope>REVIEW</scope>
</reference>
<reference key="13">
    <citation type="journal article" date="2015" name="Am. J. Med. Genet. A">
        <title>ELP2 is a novel gene implicated in neurodevelopmental disabilities.</title>
        <authorList>
            <person name="Cohen J.S."/>
            <person name="Srivastava S."/>
            <person name="Farwell K.D."/>
            <person name="Lu H.M."/>
            <person name="Zeng W."/>
            <person name="Lu H."/>
            <person name="Chao E.C."/>
            <person name="Fatemi A."/>
        </authorList>
    </citation>
    <scope>VARIANTS MRT58 ARG-206 AND TRP-462</scope>
    <scope>INVOLVEMENT IN MRT58</scope>
</reference>
<comment type="function">
    <text evidence="12">Component of the elongator complex which is required for multiple tRNA modifications, including mcm5U (5-methoxycarbonylmethyl uridine), mcm5s2U (5-methoxycarbonylmethyl-2-thiouridine), and ncm5U (5-carbamoylmethyl uridine) (PubMed:29332244). The elongator complex catalyzes the formation of carboxymethyluridine in the wobble base at position 34 in tRNAs (PubMed:29332244).</text>
</comment>
<comment type="pathway">
    <text evidence="12">tRNA modification; 5-methoxycarbonylmethyl-2-thiouridine-tRNA biosynthesis.</text>
</comment>
<comment type="subunit">
    <text evidence="2 3 4 6">Component of the elongator complex which consists of ELP1, ELP2, ELP3, ELP4, ELP5 and ELP6 (PubMed:11714725, PubMed:11818576, PubMed:22854966, PubMed:25960406). Interacts with STAT3 and JAKs (By similarity).</text>
</comment>
<comment type="subcellular location">
    <subcellularLocation>
        <location evidence="3 4">Cytoplasm</location>
    </subcellularLocation>
    <subcellularLocation>
        <location evidence="3 4">Nucleus</location>
    </subcellularLocation>
</comment>
<comment type="alternative products">
    <event type="alternative splicing"/>
    <isoform>
        <id>Q6IA86-1</id>
        <name>1</name>
        <sequence type="displayed"/>
    </isoform>
    <isoform>
        <id>Q6IA86-2</id>
        <name>2</name>
        <sequence type="described" ref="VSP_016531 VSP_016532"/>
    </isoform>
    <isoform>
        <id>Q6IA86-3</id>
        <name>3</name>
        <sequence type="described" ref="VSP_016531"/>
    </isoform>
    <isoform>
        <id>Q6IA86-4</id>
        <name>4</name>
        <sequence type="described" ref="VSP_016533"/>
    </isoform>
    <isoform>
        <id>Q6IA86-5</id>
        <name>5</name>
        <sequence type="described" ref="VSP_043410 VSP_016532"/>
    </isoform>
    <isoform>
        <id>Q6IA86-6</id>
        <name>6</name>
        <sequence type="described" ref="VSP_044979"/>
    </isoform>
    <isoform>
        <id>Q6IA86-7</id>
        <name>7</name>
        <sequence type="described" ref="VSP_044978"/>
    </isoform>
</comment>
<comment type="domain">
    <text evidence="1">Folds into a two seven-bladed beta-propeller structure which is required for elongator complex assembly.</text>
</comment>
<comment type="disease" evidence="7">
    <disease id="DI-04902">
        <name>Intellectual developmental disorder, autosomal recessive 58</name>
        <acronym>MRT58</acronym>
        <description>A disorder characterized by significantly below average general intellectual functioning associated with impairments in adaptive behavior and manifested during the developmental period. MRT58 transmission pattern is consistent with autosomal recessive inheritance.</description>
        <dbReference type="MIM" id="617270"/>
    </disease>
    <text>The disease is caused by variants affecting the gene represented in this entry.</text>
</comment>
<comment type="miscellaneous">
    <molecule>Isoform 4</molecule>
    <text evidence="15">May be produced at very low levels due to a premature stop codon in the mRNA, leading to nonsense-mediated mRNA decay.</text>
</comment>
<comment type="similarity">
    <text evidence="15">Belongs to the WD repeat ELP2 family.</text>
</comment>
<comment type="caution">
    <text evidence="16 17 18">The elongator complex was originally thought to play a role in transcription elongation. However, it is no longer thought to play a direct role in this process and its primary function is thought to be in tRNA modification.</text>
</comment>
<feature type="chain" id="PRO_0000051241" description="Elongator complex protein 2">
    <location>
        <begin position="1"/>
        <end position="826"/>
    </location>
</feature>
<feature type="repeat" description="WD 1">
    <location>
        <begin position="13"/>
        <end position="53"/>
    </location>
</feature>
<feature type="repeat" description="WD 2">
    <location>
        <begin position="56"/>
        <end position="100"/>
    </location>
</feature>
<feature type="repeat" description="WD 3">
    <location>
        <begin position="105"/>
        <end position="152"/>
    </location>
</feature>
<feature type="repeat" description="WD 4">
    <location>
        <begin position="158"/>
        <end position="200"/>
    </location>
</feature>
<feature type="repeat" description="WD 5">
    <location>
        <begin position="205"/>
        <end position="246"/>
    </location>
</feature>
<feature type="repeat" description="WD 6">
    <location>
        <begin position="281"/>
        <end position="329"/>
    </location>
</feature>
<feature type="repeat" description="WD 7">
    <location>
        <begin position="339"/>
        <end position="378"/>
    </location>
</feature>
<feature type="repeat" description="WD 8">
    <location>
        <begin position="386"/>
        <end position="425"/>
    </location>
</feature>
<feature type="repeat" description="WD 9">
    <location>
        <begin position="436"/>
        <end position="474"/>
    </location>
</feature>
<feature type="repeat" description="WD 10">
    <location>
        <begin position="565"/>
        <end position="609"/>
    </location>
</feature>
<feature type="repeat" description="WD 11">
    <location>
        <begin position="612"/>
        <end position="651"/>
    </location>
</feature>
<feature type="repeat" description="WD 12">
    <location>
        <begin position="667"/>
        <end position="706"/>
    </location>
</feature>
<feature type="repeat" description="WD 13">
    <location>
        <begin position="712"/>
        <end position="753"/>
    </location>
</feature>
<feature type="repeat" description="WD 14">
    <location>
        <begin position="777"/>
        <end position="826"/>
    </location>
</feature>
<feature type="splice variant" id="VSP_044978" description="In isoform 7." evidence="10">
    <location>
        <begin position="149"/>
        <end position="218"/>
    </location>
</feature>
<feature type="splice variant" id="VSP_016531" description="In isoform 2 and isoform 3." evidence="10 11 13">
    <location>
        <begin position="149"/>
        <end position="174"/>
    </location>
</feature>
<feature type="splice variant" id="VSP_043410" description="In isoform 5." evidence="10">
    <original>MCLQTLNFGNGFALALCLSFLPNTDV</original>
    <variation>TWKTGQVERGRAWKPPASLALCSRSCDSMVSCYASILCKALWKEKLHTFWHHNRISFLPSAFRPI</variation>
    <location>
        <begin position="150"/>
        <end position="175"/>
    </location>
</feature>
<feature type="splice variant" id="VSP_044979" description="In isoform 6." evidence="10">
    <original>V</original>
    <variation>VTWKTGQVERGRAWKPPASLALCSRSCDSMVSCYASILCKALWKEKLHTFWHHNRISFLPSAFRPI</variation>
    <location>
        <position position="175"/>
    </location>
</feature>
<feature type="splice variant" id="VSP_016532" description="In isoform 2 and isoform 5." evidence="10 13">
    <location>
        <begin position="332"/>
        <end position="375"/>
    </location>
</feature>
<feature type="splice variant" id="VSP_016533" description="In isoform 4." evidence="14">
    <original>EPVFSLFAFTNKITSVHSRIIWSCDWSPDSKYFFTGSRDKKVVVWGECDSTDDCIEHNIGPCSSVLDVGGAVTAVSVCPVLHPSQRYVVAVGLECGKICLYTWKKTDQVPEINDWTHCVETSQSQSHTLAIRKLCWKNCSGKTEQKEAEGAEWLHFASCGEDHTVKIHRVNKCAL</original>
    <variation>VELFGLVIGVLTASISSLGVETKRWLSGVSATPLMTVLSTTLAPAPQSWTWVGL</variation>
    <location>
        <begin position="652"/>
        <end position="826"/>
    </location>
</feature>
<feature type="sequence variant" id="VAR_024072" description="In dbSNP:rs1785934." evidence="5 9">
    <original>T</original>
    <variation>P</variation>
    <location>
        <position position="128"/>
    </location>
</feature>
<feature type="sequence variant" id="VAR_077989" description="In MRT58; uncertain significance; dbSNP:rs773432002." evidence="7">
    <original>H</original>
    <variation>R</variation>
    <location>
        <position position="206"/>
    </location>
</feature>
<feature type="sequence variant" id="VAR_024073" description="In dbSNP:rs1785928." evidence="5 9">
    <original>V</original>
    <variation>M</variation>
    <location>
        <position position="305"/>
    </location>
</feature>
<feature type="sequence variant" id="VAR_024074" description="In dbSNP:rs16967474.">
    <original>H</original>
    <variation>R</variation>
    <location>
        <position position="359"/>
    </location>
</feature>
<feature type="sequence variant" id="VAR_077990" description="In MRT58; uncertain significance; dbSNP:rs767713084." evidence="7">
    <original>R</original>
    <variation>W</variation>
    <location>
        <position position="462"/>
    </location>
</feature>
<feature type="sequence variant" id="VAR_033804" description="In dbSNP:rs28463092.">
    <original>I</original>
    <variation>T</variation>
    <location>
        <position position="541"/>
    </location>
</feature>
<feature type="sequence variant" id="VAR_033805" description="In dbSNP:rs17563617.">
    <original>T</original>
    <variation>P</variation>
    <location>
        <position position="543"/>
    </location>
</feature>
<feature type="sequence variant" id="VAR_024075" description="In dbSNP:rs12607773.">
    <original>E</original>
    <variation>G</variation>
    <location>
        <position position="795"/>
    </location>
</feature>
<feature type="sequence variant" id="VAR_024076" description="In dbSNP:rs1044128.">
    <original>H</original>
    <variation>P</variation>
    <location>
        <position position="806"/>
    </location>
</feature>
<feature type="sequence variant" id="VAR_033806" description="In dbSNP:rs1044134.">
    <original>T</original>
    <variation>P</variation>
    <location>
        <position position="815"/>
    </location>
</feature>
<feature type="mutagenesis site" description="Abolishes interaction with ELP1 and ELP3." evidence="8">
    <location>
        <begin position="1"/>
        <end position="17"/>
    </location>
</feature>
<feature type="mutagenesis site" description="No effect on interaction with ELP1 or ELP3; when associated with A-636, A-670 and A-689." evidence="8">
    <original>R</original>
    <variation>A</variation>
    <location>
        <position position="634"/>
    </location>
</feature>
<feature type="mutagenesis site" description="No effect on interaction with ELP1 or ELP3; when associated with A-634, A-670 and A-689." evidence="8">
    <original>R</original>
    <variation>A</variation>
    <location>
        <position position="636"/>
    </location>
</feature>
<feature type="mutagenesis site" description="No effect on interaction with ELP1 or ELP3; when associated with A-634, A-636 and A-689." evidence="8">
    <original>R</original>
    <variation>A</variation>
    <location>
        <position position="670"/>
    </location>
</feature>
<feature type="mutagenesis site" description="No effect on interaction with ELP1 or ELP3; when associated with A-634, A-636 and A-670." evidence="8">
    <original>R</original>
    <variation>A</variation>
    <location>
        <position position="689"/>
    </location>
</feature>
<feature type="sequence conflict" description="In Ref. 2; AAQ03093." evidence="15" ref="2">
    <original>W</original>
    <variation>R</variation>
    <location>
        <position position="66"/>
    </location>
</feature>
<feature type="sequence conflict" description="In Ref. 4; CAG33550." evidence="15" ref="4">
    <original>V</original>
    <variation>F</variation>
    <location>
        <position position="267"/>
    </location>
</feature>
<feature type="sequence conflict" description="In Ref. 4; CAG33550." evidence="15" ref="4">
    <original>Q</original>
    <variation>R</variation>
    <location>
        <position position="302"/>
    </location>
</feature>
<feature type="sequence conflict" description="In Ref. 3; BAB14193." evidence="15" ref="3">
    <original>R</original>
    <variation>G</variation>
    <location>
        <position position="376"/>
    </location>
</feature>
<feature type="sequence conflict" description="In Ref. 3; BAF85740." evidence="15" ref="3">
    <original>T</original>
    <variation>A</variation>
    <location>
        <position position="412"/>
    </location>
</feature>
<feature type="sequence conflict" description="In Ref. 2; AAQ03093." evidence="15" ref="2">
    <original>K</original>
    <variation>E</variation>
    <location>
        <position position="590"/>
    </location>
</feature>
<feature type="sequence conflict" description="In Ref. 3; BAG63452." evidence="15" ref="3">
    <original>A</original>
    <variation>T</variation>
    <location>
        <position position="621"/>
    </location>
</feature>
<feature type="sequence conflict" description="In Ref. 1; AAK97355 and 3; BAB14193." evidence="15" ref="1 3">
    <original>E</original>
    <variation>V</variation>
    <location>
        <position position="698"/>
    </location>
</feature>
<feature type="sequence conflict" description="In Ref. 3; BAF85740." evidence="15" ref="3">
    <original>I</original>
    <variation>V</variation>
    <location>
        <position position="782"/>
    </location>
</feature>
<feature type="strand" evidence="19">
    <location>
        <begin position="6"/>
        <end position="12"/>
    </location>
</feature>
<feature type="strand" evidence="19">
    <location>
        <begin position="32"/>
        <end position="36"/>
    </location>
</feature>
<feature type="strand" evidence="19">
    <location>
        <begin position="39"/>
        <end position="44"/>
    </location>
</feature>
<feature type="turn" evidence="19">
    <location>
        <begin position="45"/>
        <end position="48"/>
    </location>
</feature>
<feature type="strand" evidence="19">
    <location>
        <begin position="49"/>
        <end position="54"/>
    </location>
</feature>
<feature type="strand" evidence="19">
    <location>
        <begin position="61"/>
        <end position="66"/>
    </location>
</feature>
<feature type="strand" evidence="20">
    <location>
        <begin position="70"/>
        <end position="72"/>
    </location>
</feature>
<feature type="strand" evidence="19">
    <location>
        <begin position="77"/>
        <end position="104"/>
    </location>
</feature>
<feature type="strand" evidence="19">
    <location>
        <begin position="110"/>
        <end position="117"/>
    </location>
</feature>
<feature type="strand" evidence="19">
    <location>
        <begin position="128"/>
        <end position="145"/>
    </location>
</feature>
<feature type="strand" evidence="19">
    <location>
        <begin position="148"/>
        <end position="156"/>
    </location>
</feature>
<feature type="strand" evidence="19">
    <location>
        <begin position="162"/>
        <end position="169"/>
    </location>
</feature>
<feature type="strand" evidence="19">
    <location>
        <begin position="176"/>
        <end position="182"/>
    </location>
</feature>
<feature type="turn" evidence="20">
    <location>
        <begin position="183"/>
        <end position="185"/>
    </location>
</feature>
<feature type="strand" evidence="19">
    <location>
        <begin position="187"/>
        <end position="193"/>
    </location>
</feature>
<feature type="strand" evidence="19">
    <location>
        <begin position="196"/>
        <end position="203"/>
    </location>
</feature>
<feature type="strand" evidence="19">
    <location>
        <begin position="210"/>
        <end position="218"/>
    </location>
</feature>
<feature type="strand" evidence="19">
    <location>
        <begin position="221"/>
        <end position="228"/>
    </location>
</feature>
<feature type="strand" evidence="20">
    <location>
        <begin position="229"/>
        <end position="232"/>
    </location>
</feature>
<feature type="strand" evidence="19">
    <location>
        <begin position="233"/>
        <end position="240"/>
    </location>
</feature>
<feature type="strand" evidence="19">
    <location>
        <begin position="258"/>
        <end position="266"/>
    </location>
</feature>
<feature type="strand" evidence="19">
    <location>
        <begin position="268"/>
        <end position="279"/>
    </location>
</feature>
<feature type="strand" evidence="19">
    <location>
        <begin position="286"/>
        <end position="290"/>
    </location>
</feature>
<feature type="strand" evidence="19">
    <location>
        <begin position="295"/>
        <end position="297"/>
    </location>
</feature>
<feature type="strand" evidence="19">
    <location>
        <begin position="300"/>
        <end position="302"/>
    </location>
</feature>
<feature type="strand" evidence="19">
    <location>
        <begin position="307"/>
        <end position="311"/>
    </location>
</feature>
<feature type="turn" evidence="19">
    <location>
        <begin position="312"/>
        <end position="314"/>
    </location>
</feature>
<feature type="strand" evidence="19">
    <location>
        <begin position="315"/>
        <end position="321"/>
    </location>
</feature>
<feature type="strand" evidence="19">
    <location>
        <begin position="323"/>
        <end position="326"/>
    </location>
</feature>
<feature type="strand" evidence="19">
    <location>
        <begin position="328"/>
        <end position="335"/>
    </location>
</feature>
<feature type="strand" evidence="19">
    <location>
        <begin position="344"/>
        <end position="349"/>
    </location>
</feature>
<feature type="strand" evidence="19">
    <location>
        <begin position="351"/>
        <end position="363"/>
    </location>
</feature>
<feature type="strand" evidence="19">
    <location>
        <begin position="365"/>
        <end position="370"/>
    </location>
</feature>
<feature type="strand" evidence="19">
    <location>
        <begin position="378"/>
        <end position="380"/>
    </location>
</feature>
<feature type="strand" evidence="19">
    <location>
        <begin position="391"/>
        <end position="396"/>
    </location>
</feature>
<feature type="strand" evidence="19">
    <location>
        <begin position="398"/>
        <end position="401"/>
    </location>
</feature>
<feature type="strand" evidence="19">
    <location>
        <begin position="403"/>
        <end position="407"/>
    </location>
</feature>
<feature type="strand" evidence="19">
    <location>
        <begin position="410"/>
        <end position="418"/>
    </location>
</feature>
<feature type="strand" evidence="19">
    <location>
        <begin position="427"/>
        <end position="432"/>
    </location>
</feature>
<feature type="strand" evidence="19">
    <location>
        <begin position="441"/>
        <end position="448"/>
    </location>
</feature>
<feature type="strand" evidence="19">
    <location>
        <begin position="451"/>
        <end position="459"/>
    </location>
</feature>
<feature type="strand" evidence="19">
    <location>
        <begin position="461"/>
        <end position="465"/>
    </location>
</feature>
<feature type="helix" evidence="19">
    <location>
        <begin position="468"/>
        <end position="478"/>
    </location>
</feature>
<feature type="helix" evidence="19">
    <location>
        <begin position="482"/>
        <end position="486"/>
    </location>
</feature>
<feature type="turn" evidence="19">
    <location>
        <begin position="487"/>
        <end position="489"/>
    </location>
</feature>
<feature type="strand" evidence="19">
    <location>
        <begin position="501"/>
        <end position="504"/>
    </location>
</feature>
<feature type="turn" evidence="19">
    <location>
        <begin position="548"/>
        <end position="553"/>
    </location>
</feature>
<feature type="strand" evidence="19">
    <location>
        <begin position="559"/>
        <end position="563"/>
    </location>
</feature>
<feature type="strand" evidence="19">
    <location>
        <begin position="570"/>
        <end position="572"/>
    </location>
</feature>
<feature type="strand" evidence="20">
    <location>
        <begin position="579"/>
        <end position="586"/>
    </location>
</feature>
<feature type="turn" evidence="19">
    <location>
        <begin position="591"/>
        <end position="593"/>
    </location>
</feature>
<feature type="strand" evidence="19">
    <location>
        <begin position="595"/>
        <end position="599"/>
    </location>
</feature>
<feature type="strand" evidence="19">
    <location>
        <begin position="601"/>
        <end position="603"/>
    </location>
</feature>
<feature type="strand" evidence="19">
    <location>
        <begin position="608"/>
        <end position="611"/>
    </location>
</feature>
<feature type="strand" evidence="19">
    <location>
        <begin position="617"/>
        <end position="622"/>
    </location>
</feature>
<feature type="strand" evidence="19">
    <location>
        <begin position="626"/>
        <end position="633"/>
    </location>
</feature>
<feature type="strand" evidence="19">
    <location>
        <begin position="638"/>
        <end position="643"/>
    </location>
</feature>
<feature type="strand" evidence="19">
    <location>
        <begin position="655"/>
        <end position="660"/>
    </location>
</feature>
<feature type="turn" evidence="19">
    <location>
        <begin position="663"/>
        <end position="665"/>
    </location>
</feature>
<feature type="strand" evidence="19">
    <location>
        <begin position="672"/>
        <end position="677"/>
    </location>
</feature>
<feature type="strand" evidence="19">
    <location>
        <begin position="684"/>
        <end position="688"/>
    </location>
</feature>
<feature type="strand" evidence="19">
    <location>
        <begin position="693"/>
        <end position="697"/>
    </location>
</feature>
<feature type="strand" evidence="19">
    <location>
        <begin position="723"/>
        <end position="728"/>
    </location>
</feature>
<feature type="strand" evidence="19">
    <location>
        <begin position="738"/>
        <end position="747"/>
    </location>
</feature>
<feature type="strand" evidence="19">
    <location>
        <begin position="749"/>
        <end position="754"/>
    </location>
</feature>
<feature type="strand" evidence="19">
    <location>
        <begin position="759"/>
        <end position="761"/>
    </location>
</feature>
<feature type="strand" evidence="19">
    <location>
        <begin position="766"/>
        <end position="771"/>
    </location>
</feature>
<feature type="turn" evidence="19">
    <location>
        <begin position="774"/>
        <end position="776"/>
    </location>
</feature>
<feature type="strand" evidence="19">
    <location>
        <begin position="782"/>
        <end position="787"/>
    </location>
</feature>
<feature type="strand" evidence="19">
    <location>
        <begin position="792"/>
        <end position="795"/>
    </location>
</feature>
<feature type="strand" evidence="19">
    <location>
        <begin position="797"/>
        <end position="802"/>
    </location>
</feature>
<feature type="strand" evidence="19">
    <location>
        <begin position="804"/>
        <end position="814"/>
    </location>
</feature>
<feature type="strand" evidence="19">
    <location>
        <begin position="816"/>
        <end position="822"/>
    </location>
</feature>
<feature type="turn" evidence="19">
    <location>
        <begin position="823"/>
        <end position="825"/>
    </location>
</feature>
<protein>
    <recommendedName>
        <fullName>Elongator complex protein 2</fullName>
        <shortName>ELP2</shortName>
    </recommendedName>
    <alternativeName>
        <fullName>SHINC-2</fullName>
    </alternativeName>
    <alternativeName>
        <fullName>STAT3-interacting protein 1</fullName>
        <shortName>StIP1</shortName>
    </alternativeName>
</protein>
<keyword id="KW-0002">3D-structure</keyword>
<keyword id="KW-0025">Alternative splicing</keyword>
<keyword id="KW-0963">Cytoplasm</keyword>
<keyword id="KW-0225">Disease variant</keyword>
<keyword id="KW-0991">Intellectual disability</keyword>
<keyword id="KW-0539">Nucleus</keyword>
<keyword id="KW-1267">Proteomics identification</keyword>
<keyword id="KW-1185">Reference proteome</keyword>
<keyword id="KW-0677">Repeat</keyword>
<keyword id="KW-0819">tRNA processing</keyword>
<keyword id="KW-0853">WD repeat</keyword>
<accession>Q6IA86</accession>
<accession>A8KAI6</accession>
<accession>B4DTG0</accession>
<accession>B4DXP0</accession>
<accession>E7EP23</accession>
<accession>E9PCX0</accession>
<accession>Q53GZ0</accession>
<accession>Q687Y8</accession>
<accession>Q8N5C2</accession>
<accession>Q96GV4</accession>
<accession>Q96PI7</accession>
<accession>Q9H9N0</accession>
<accession>Q9NV81</accession>
<name>ELP2_HUMAN</name>
<dbReference type="EMBL" id="AF332505">
    <property type="protein sequence ID" value="AAK97355.1"/>
    <property type="molecule type" value="mRNA"/>
</dbReference>
<dbReference type="EMBL" id="AF403223">
    <property type="protein sequence ID" value="AAQ03093.1"/>
    <property type="molecule type" value="mRNA"/>
</dbReference>
<dbReference type="EMBL" id="AK001741">
    <property type="protein sequence ID" value="BAA91874.1"/>
    <property type="molecule type" value="mRNA"/>
</dbReference>
<dbReference type="EMBL" id="AK022709">
    <property type="protein sequence ID" value="BAB14193.1"/>
    <property type="molecule type" value="mRNA"/>
</dbReference>
<dbReference type="EMBL" id="AK293051">
    <property type="protein sequence ID" value="BAF85740.1"/>
    <property type="molecule type" value="mRNA"/>
</dbReference>
<dbReference type="EMBL" id="AK300201">
    <property type="protein sequence ID" value="BAG61972.1"/>
    <property type="molecule type" value="mRNA"/>
</dbReference>
<dbReference type="EMBL" id="AK302062">
    <property type="protein sequence ID" value="BAG63452.1"/>
    <property type="molecule type" value="mRNA"/>
</dbReference>
<dbReference type="EMBL" id="CR457269">
    <property type="protein sequence ID" value="CAG33550.1"/>
    <property type="molecule type" value="mRNA"/>
</dbReference>
<dbReference type="EMBL" id="AK222791">
    <property type="protein sequence ID" value="BAD96511.1"/>
    <property type="molecule type" value="mRNA"/>
</dbReference>
<dbReference type="EMBL" id="AC023043">
    <property type="status" value="NOT_ANNOTATED_CDS"/>
    <property type="molecule type" value="Genomic_DNA"/>
</dbReference>
<dbReference type="EMBL" id="AC091060">
    <property type="status" value="NOT_ANNOTATED_CDS"/>
    <property type="molecule type" value="Genomic_DNA"/>
</dbReference>
<dbReference type="EMBL" id="BC009211">
    <property type="protein sequence ID" value="AAH09211.2"/>
    <property type="molecule type" value="mRNA"/>
</dbReference>
<dbReference type="EMBL" id="BC032553">
    <property type="protein sequence ID" value="AAH32553.1"/>
    <property type="molecule type" value="mRNA"/>
</dbReference>
<dbReference type="CCDS" id="CCDS11918.1">
    <molecule id="Q6IA86-1"/>
</dbReference>
<dbReference type="CCDS" id="CCDS56065.1">
    <molecule id="Q6IA86-6"/>
</dbReference>
<dbReference type="CCDS" id="CCDS56066.1">
    <molecule id="Q6IA86-5"/>
</dbReference>
<dbReference type="CCDS" id="CCDS56067.1">
    <molecule id="Q6IA86-3"/>
</dbReference>
<dbReference type="CCDS" id="CCDS56068.1">
    <molecule id="Q6IA86-2"/>
</dbReference>
<dbReference type="CCDS" id="CCDS56069.1">
    <molecule id="Q6IA86-7"/>
</dbReference>
<dbReference type="RefSeq" id="NP_001229804.1">
    <molecule id="Q6IA86-6"/>
    <property type="nucleotide sequence ID" value="NM_001242875.3"/>
</dbReference>
<dbReference type="RefSeq" id="NP_001229805.1">
    <molecule id="Q6IA86-5"/>
    <property type="nucleotide sequence ID" value="NM_001242876.3"/>
</dbReference>
<dbReference type="RefSeq" id="NP_001229806.1">
    <molecule id="Q6IA86-3"/>
    <property type="nucleotide sequence ID" value="NM_001242877.3"/>
</dbReference>
<dbReference type="RefSeq" id="NP_001229807.1">
    <molecule id="Q6IA86-2"/>
    <property type="nucleotide sequence ID" value="NM_001242878.3"/>
</dbReference>
<dbReference type="RefSeq" id="NP_001229808.1">
    <molecule id="Q6IA86-7"/>
    <property type="nucleotide sequence ID" value="NM_001242879.3"/>
</dbReference>
<dbReference type="RefSeq" id="NP_060725.1">
    <molecule id="Q6IA86-1"/>
    <property type="nucleotide sequence ID" value="NM_018255.4"/>
</dbReference>
<dbReference type="PDB" id="8PTX">
    <property type="method" value="EM"/>
    <property type="resolution" value="2.87 A"/>
    <property type="chains" value="B=1-826"/>
</dbReference>
<dbReference type="PDB" id="8PTY">
    <property type="method" value="EM"/>
    <property type="resolution" value="3.58 A"/>
    <property type="chains" value="B=1-826"/>
</dbReference>
<dbReference type="PDB" id="8PTZ">
    <property type="method" value="EM"/>
    <property type="resolution" value="3.35 A"/>
    <property type="chains" value="B=1-826"/>
</dbReference>
<dbReference type="PDB" id="8PU0">
    <property type="method" value="EM"/>
    <property type="resolution" value="4.25 A"/>
    <property type="chains" value="B=1-826"/>
</dbReference>
<dbReference type="PDBsum" id="8PTX"/>
<dbReference type="PDBsum" id="8PTY"/>
<dbReference type="PDBsum" id="8PTZ"/>
<dbReference type="PDBsum" id="8PU0"/>
<dbReference type="EMDB" id="EMD-17924"/>
<dbReference type="EMDB" id="EMD-17925"/>
<dbReference type="EMDB" id="EMD-17926"/>
<dbReference type="EMDB" id="EMD-17927"/>
<dbReference type="SMR" id="Q6IA86"/>
<dbReference type="BioGRID" id="120541">
    <property type="interactions" value="98"/>
</dbReference>
<dbReference type="ComplexPortal" id="CPX-1949">
    <property type="entry name" value="Elongator holoenzyme complex"/>
</dbReference>
<dbReference type="CORUM" id="Q6IA86"/>
<dbReference type="DIP" id="DIP-56235N"/>
<dbReference type="FunCoup" id="Q6IA86">
    <property type="interactions" value="3922"/>
</dbReference>
<dbReference type="IntAct" id="Q6IA86">
    <property type="interactions" value="33"/>
</dbReference>
<dbReference type="MINT" id="Q6IA86"/>
<dbReference type="STRING" id="9606.ENSP00000414851"/>
<dbReference type="GlyGen" id="Q6IA86">
    <property type="glycosylation" value="2 sites, 1 N-linked glycan (1 site), 1 O-linked glycan (1 site)"/>
</dbReference>
<dbReference type="iPTMnet" id="Q6IA86"/>
<dbReference type="PhosphoSitePlus" id="Q6IA86"/>
<dbReference type="SwissPalm" id="Q6IA86"/>
<dbReference type="BioMuta" id="ELP2"/>
<dbReference type="DMDM" id="83305834"/>
<dbReference type="jPOST" id="Q6IA86"/>
<dbReference type="MassIVE" id="Q6IA86"/>
<dbReference type="PaxDb" id="9606-ENSP00000414851"/>
<dbReference type="PeptideAtlas" id="Q6IA86"/>
<dbReference type="ProteomicsDB" id="17271"/>
<dbReference type="ProteomicsDB" id="19532"/>
<dbReference type="ProteomicsDB" id="66359">
    <molecule id="Q6IA86-1"/>
</dbReference>
<dbReference type="ProteomicsDB" id="66360">
    <molecule id="Q6IA86-2"/>
</dbReference>
<dbReference type="ProteomicsDB" id="66361">
    <molecule id="Q6IA86-3"/>
</dbReference>
<dbReference type="ProteomicsDB" id="66362">
    <molecule id="Q6IA86-4"/>
</dbReference>
<dbReference type="ProteomicsDB" id="66363">
    <molecule id="Q6IA86-5"/>
</dbReference>
<dbReference type="Pumba" id="Q6IA86"/>
<dbReference type="Antibodypedia" id="657">
    <property type="antibodies" value="117 antibodies from 25 providers"/>
</dbReference>
<dbReference type="DNASU" id="55250"/>
<dbReference type="Ensembl" id="ENST00000350494.10">
    <molecule id="Q6IA86-5"/>
    <property type="protein sequence ID" value="ENSP00000316051.6"/>
    <property type="gene ID" value="ENSG00000134759.14"/>
</dbReference>
<dbReference type="Ensembl" id="ENST00000351393.10">
    <molecule id="Q6IA86-3"/>
    <property type="protein sequence ID" value="ENSP00000257191.7"/>
    <property type="gene ID" value="ENSG00000134759.14"/>
</dbReference>
<dbReference type="Ensembl" id="ENST00000358232.11">
    <molecule id="Q6IA86-1"/>
    <property type="protein sequence ID" value="ENSP00000350967.6"/>
    <property type="gene ID" value="ENSG00000134759.14"/>
</dbReference>
<dbReference type="Ensembl" id="ENST00000423854.6">
    <molecule id="Q6IA86-7"/>
    <property type="protein sequence ID" value="ENSP00000391202.2"/>
    <property type="gene ID" value="ENSG00000134759.14"/>
</dbReference>
<dbReference type="Ensembl" id="ENST00000442325.6">
    <molecule id="Q6IA86-6"/>
    <property type="protein sequence ID" value="ENSP00000414851.2"/>
    <property type="gene ID" value="ENSG00000134759.14"/>
</dbReference>
<dbReference type="Ensembl" id="ENST00000539560.5">
    <molecule id="Q6IA86-4"/>
    <property type="protein sequence ID" value="ENSP00000443555.1"/>
    <property type="gene ID" value="ENSG00000134759.14"/>
</dbReference>
<dbReference type="Ensembl" id="ENST00000542824.5">
    <molecule id="Q6IA86-2"/>
    <property type="protein sequence ID" value="ENSP00000443800.1"/>
    <property type="gene ID" value="ENSG00000134759.14"/>
</dbReference>
<dbReference type="GeneID" id="55250"/>
<dbReference type="KEGG" id="hsa:55250"/>
<dbReference type="MANE-Select" id="ENST00000358232.11">
    <property type="protein sequence ID" value="ENSP00000350967.6"/>
    <property type="RefSeq nucleotide sequence ID" value="NM_018255.4"/>
    <property type="RefSeq protein sequence ID" value="NP_060725.1"/>
</dbReference>
<dbReference type="UCSC" id="uc002kzk.4">
    <molecule id="Q6IA86-1"/>
    <property type="organism name" value="human"/>
</dbReference>
<dbReference type="AGR" id="HGNC:18248"/>
<dbReference type="CTD" id="55250"/>
<dbReference type="DisGeNET" id="55250"/>
<dbReference type="GeneCards" id="ELP2"/>
<dbReference type="HGNC" id="HGNC:18248">
    <property type="gene designation" value="ELP2"/>
</dbReference>
<dbReference type="HPA" id="ENSG00000134759">
    <property type="expression patterns" value="Low tissue specificity"/>
</dbReference>
<dbReference type="MalaCards" id="ELP2"/>
<dbReference type="MIM" id="616054">
    <property type="type" value="gene"/>
</dbReference>
<dbReference type="MIM" id="617270">
    <property type="type" value="phenotype"/>
</dbReference>
<dbReference type="neXtProt" id="NX_Q6IA86"/>
<dbReference type="OpenTargets" id="ENSG00000134759"/>
<dbReference type="PharmGKB" id="PA162385051"/>
<dbReference type="VEuPathDB" id="HostDB:ENSG00000134759"/>
<dbReference type="eggNOG" id="KOG1063">
    <property type="taxonomic scope" value="Eukaryota"/>
</dbReference>
<dbReference type="GeneTree" id="ENSGT00390000000916"/>
<dbReference type="HOGENOM" id="CLU_006430_1_0_1"/>
<dbReference type="InParanoid" id="Q6IA86"/>
<dbReference type="OMA" id="ENFRHIS"/>
<dbReference type="OrthoDB" id="27911at2759"/>
<dbReference type="PAN-GO" id="Q6IA86">
    <property type="GO annotations" value="1 GO annotation based on evolutionary models"/>
</dbReference>
<dbReference type="PhylomeDB" id="Q6IA86"/>
<dbReference type="TreeFam" id="TF105985"/>
<dbReference type="BioCyc" id="MetaCyc:ENSG00000134759-MONOMER"/>
<dbReference type="PathwayCommons" id="Q6IA86"/>
<dbReference type="Reactome" id="R-HSA-3214847">
    <property type="pathway name" value="HATs acetylate histones"/>
</dbReference>
<dbReference type="SignaLink" id="Q6IA86"/>
<dbReference type="SIGNOR" id="Q6IA86"/>
<dbReference type="UniPathway" id="UPA00988"/>
<dbReference type="BioGRID-ORCS" id="55250">
    <property type="hits" value="574 hits in 1174 CRISPR screens"/>
</dbReference>
<dbReference type="CD-CODE" id="DEE660B4">
    <property type="entry name" value="Stress granule"/>
</dbReference>
<dbReference type="ChiTaRS" id="ELP2">
    <property type="organism name" value="human"/>
</dbReference>
<dbReference type="GeneWiki" id="ELP2"/>
<dbReference type="GenomeRNAi" id="55250"/>
<dbReference type="Pharos" id="Q6IA86">
    <property type="development level" value="Tbio"/>
</dbReference>
<dbReference type="PRO" id="PR:Q6IA86"/>
<dbReference type="Proteomes" id="UP000005640">
    <property type="component" value="Chromosome 18"/>
</dbReference>
<dbReference type="RNAct" id="Q6IA86">
    <property type="molecule type" value="protein"/>
</dbReference>
<dbReference type="Bgee" id="ENSG00000134759">
    <property type="expression patterns" value="Expressed in left ovary and 183 other cell types or tissues"/>
</dbReference>
<dbReference type="ExpressionAtlas" id="Q6IA86">
    <property type="expression patterns" value="baseline and differential"/>
</dbReference>
<dbReference type="GO" id="GO:0005737">
    <property type="term" value="C:cytoplasm"/>
    <property type="evidence" value="ECO:0000303"/>
    <property type="project" value="HGNC-UCL"/>
</dbReference>
<dbReference type="GO" id="GO:0005829">
    <property type="term" value="C:cytosol"/>
    <property type="evidence" value="ECO:0000314"/>
    <property type="project" value="HPA"/>
</dbReference>
<dbReference type="GO" id="GO:0033588">
    <property type="term" value="C:elongator holoenzyme complex"/>
    <property type="evidence" value="ECO:0000314"/>
    <property type="project" value="UniProtKB"/>
</dbReference>
<dbReference type="GO" id="GO:0005654">
    <property type="term" value="C:nucleoplasm"/>
    <property type="evidence" value="ECO:0000314"/>
    <property type="project" value="HPA"/>
</dbReference>
<dbReference type="GO" id="GO:0008023">
    <property type="term" value="C:transcription elongation factor complex"/>
    <property type="evidence" value="ECO:0000314"/>
    <property type="project" value="HGNC-UCL"/>
</dbReference>
<dbReference type="GO" id="GO:0019901">
    <property type="term" value="F:protein kinase binding"/>
    <property type="evidence" value="ECO:0007669"/>
    <property type="project" value="Ensembl"/>
</dbReference>
<dbReference type="GO" id="GO:0046425">
    <property type="term" value="P:regulation of receptor signaling pathway via JAK-STAT"/>
    <property type="evidence" value="ECO:0007669"/>
    <property type="project" value="Ensembl"/>
</dbReference>
<dbReference type="GO" id="GO:0006357">
    <property type="term" value="P:regulation of transcription by RNA polymerase II"/>
    <property type="evidence" value="ECO:0000304"/>
    <property type="project" value="HGNC-UCL"/>
</dbReference>
<dbReference type="GO" id="GO:0006417">
    <property type="term" value="P:regulation of translation"/>
    <property type="evidence" value="ECO:0000303"/>
    <property type="project" value="ComplexPortal"/>
</dbReference>
<dbReference type="GO" id="GO:0006368">
    <property type="term" value="P:transcription elongation by RNA polymerase II"/>
    <property type="evidence" value="ECO:0000304"/>
    <property type="project" value="BHF-UCL"/>
</dbReference>
<dbReference type="GO" id="GO:0002098">
    <property type="term" value="P:tRNA wobble uridine modification"/>
    <property type="evidence" value="ECO:0000303"/>
    <property type="project" value="ComplexPortal"/>
</dbReference>
<dbReference type="CDD" id="cd00200">
    <property type="entry name" value="WD40"/>
    <property type="match status" value="1"/>
</dbReference>
<dbReference type="FunFam" id="2.130.10.10:FF:000575">
    <property type="entry name" value="Elongator acetyltransferase complex subunit 2"/>
    <property type="match status" value="1"/>
</dbReference>
<dbReference type="FunFam" id="2.130.10.10:FF:000679">
    <property type="entry name" value="Elongator acetyltransferase complex subunit 2"/>
    <property type="match status" value="1"/>
</dbReference>
<dbReference type="FunFam" id="2.130.10.10:FF:000771">
    <property type="entry name" value="Elongator acetyltransferase complex subunit 2"/>
    <property type="match status" value="1"/>
</dbReference>
<dbReference type="FunFam" id="2.130.10.10:FF:001021">
    <property type="entry name" value="Elongator acetyltransferase complex subunit 2"/>
    <property type="match status" value="1"/>
</dbReference>
<dbReference type="FunFam" id="2.130.10.10:FF:001422">
    <property type="entry name" value="Putative rna polymerase ii elongator complex subunit elp2 wd repeat superfamily"/>
    <property type="match status" value="1"/>
</dbReference>
<dbReference type="Gene3D" id="2.130.10.10">
    <property type="entry name" value="YVTN repeat-like/Quinoprotein amine dehydrogenase"/>
    <property type="match status" value="5"/>
</dbReference>
<dbReference type="InterPro" id="IPR037289">
    <property type="entry name" value="Elp2"/>
</dbReference>
<dbReference type="InterPro" id="IPR015943">
    <property type="entry name" value="WD40/YVTN_repeat-like_dom_sf"/>
</dbReference>
<dbReference type="InterPro" id="IPR036322">
    <property type="entry name" value="WD40_repeat_dom_sf"/>
</dbReference>
<dbReference type="InterPro" id="IPR001680">
    <property type="entry name" value="WD40_rpt"/>
</dbReference>
<dbReference type="PANTHER" id="PTHR44111">
    <property type="entry name" value="ELONGATOR COMPLEX PROTEIN 2"/>
    <property type="match status" value="1"/>
</dbReference>
<dbReference type="PANTHER" id="PTHR44111:SF1">
    <property type="entry name" value="ELONGATOR COMPLEX PROTEIN 2"/>
    <property type="match status" value="1"/>
</dbReference>
<dbReference type="Pfam" id="PF00400">
    <property type="entry name" value="WD40"/>
    <property type="match status" value="6"/>
</dbReference>
<dbReference type="SMART" id="SM00320">
    <property type="entry name" value="WD40"/>
    <property type="match status" value="12"/>
</dbReference>
<dbReference type="SUPFAM" id="SSF50978">
    <property type="entry name" value="WD40 repeat-like"/>
    <property type="match status" value="3"/>
</dbReference>
<dbReference type="PROSITE" id="PS50082">
    <property type="entry name" value="WD_REPEATS_2"/>
    <property type="match status" value="5"/>
</dbReference>
<dbReference type="PROSITE" id="PS50294">
    <property type="entry name" value="WD_REPEATS_REGION"/>
    <property type="match status" value="2"/>
</dbReference>
<proteinExistence type="evidence at protein level"/>
<organism>
    <name type="scientific">Homo sapiens</name>
    <name type="common">Human</name>
    <dbReference type="NCBI Taxonomy" id="9606"/>
    <lineage>
        <taxon>Eukaryota</taxon>
        <taxon>Metazoa</taxon>
        <taxon>Chordata</taxon>
        <taxon>Craniata</taxon>
        <taxon>Vertebrata</taxon>
        <taxon>Euteleostomi</taxon>
        <taxon>Mammalia</taxon>
        <taxon>Eutheria</taxon>
        <taxon>Euarchontoglires</taxon>
        <taxon>Primates</taxon>
        <taxon>Haplorrhini</taxon>
        <taxon>Catarrhini</taxon>
        <taxon>Hominidae</taxon>
        <taxon>Homo</taxon>
    </lineage>
</organism>